<comment type="function">
    <text evidence="2 7 8 9 11 13 15">Important regulator of cell cycle progression (PubMed:12972555, PubMed:8033213). Inhibits the kinase activity of CDK2 bound to cyclin A, but has little inhibitory activity on CDK2 bound to SPDYA (By similarity). Involved in G1 arrest. Potent inhibitor of cyclin E- and cyclin A-CDK2 complexes (PubMed:8033213). Forms a complex with cyclin type D-CDK4 complexes and is involved in the assembly, stability, and modulation of CCND1-CDK4 complex activation. Acts either as an inhibitor or an activator of cyclin type D-CDK4 complexes depending on its phosphorylation state and/or stoichometry.</text>
</comment>
<comment type="subunit">
    <text evidence="2 5 6 7 8 10 11 14 15">Forms a ternary complex composed of CCNE1, CDK2 and CDKN1B. Interacts directly with CCNE1; the interaction is inhibited by CDK2-dependent phosphorylation on Thr-187. Interacts with COPS5, subunit of the COP9 signalosome complex; the interaction leads to CDKN1B degradation. Interacts with NUP50; the interaction leads to nuclear import and degradation of phosphorylated CDKN1B. Interacts with CCND1 and SNX6 (By similarity). Interacts (Thr-197-phosphorylated form) with 14-3-3 proteins, binds strongly YWHAQ, weakly YWHAE and YWHAH, but not YWHAB nor YWHAZ; the interaction with YWHAQ results in translocation to the cytoplasm. Interacts with AKT1 and LYN; the interactions lead to cytoplasmic mislocation, phosphorylation of CDKN1B and inhibition of cell cycle arrest. Forms a ternary complex with CCNA2 and CDK2; CDKN1B inhibits the kinase activity of CDK2 through conformational rearrangements. Interacts (unphosphorylated form) with CDK2. Forms a complex with CDK2 and SPDYA, but does not directly interact with SPDYA. Forms a ternary complex composed of cyclin D, CDK4 and CDKN1B. Interacts (phosphorylated on Tyr-88 and Tyr-89) with CDK4; the interaction is required for cyclin D and CDK4 complex assembly, induces nuclear translocation and activates the CDK4 kinase activity. Interacts with GRB2. Interacts with PIM1. Identified in a complex with SKP1, SKP2 and CKS1B. Interacts with UHMK1; the interaction leads to cytoplasmic mislocation, phosphorylation of CDKN1B and inhibition of cell cycle arrest. Also interacts with CDK1. Dephosphorylated on Thr-187 by PPM1H, leading to CDKN1B stability (By similarity).</text>
</comment>
<comment type="interaction">
    <interactant intactId="EBI-1005742">
        <id>P46414</id>
    </interactant>
    <interactant intactId="EBI-847225">
        <id>P30285</id>
        <label>Cdk4</label>
    </interactant>
    <organismsDiffer>false</organismsDiffer>
    <experiments>2</experiments>
</comment>
<comment type="interaction">
    <interactant intactId="EBI-1005742">
        <id>P46414</id>
    </interactant>
    <interactant intactId="EBI-457180">
        <id>Q61881</id>
        <label>Mcm7</label>
    </interactant>
    <organismsDiffer>false</organismsDiffer>
    <experiments>2</experiments>
</comment>
<comment type="interaction">
    <interactant intactId="EBI-1005742">
        <id>P46414</id>
    </interactant>
    <interactant intactId="EBI-1006438">
        <id>P54227</id>
        <label>Stmn1</label>
    </interactant>
    <organismsDiffer>false</organismsDiffer>
    <experiments>2</experiments>
</comment>
<comment type="subcellular location">
    <subcellularLocation>
        <location>Nucleus</location>
    </subcellularLocation>
    <subcellularLocation>
        <location>Cytoplasm</location>
    </subcellularLocation>
    <subcellularLocation>
        <location evidence="11">Endosome</location>
    </subcellularLocation>
    <text evidence="1 11">Nuclear and cytoplasmic in quiescent cells. AKT- or RSK-mediated phosphorylation on Thr-197, binds 14-3-3, translocates to the cytoplasm and promotes cell cycle progression. Mitogen-activated UHMK1 phosphorylation on Ser-10 also results in translocation to the cytoplasm and cell cycle progression. Phosphorylation on Ser-10 facilitates nuclear export. Translocates to the nucleus on phosphorylation of Tyr-88 and Tyr-89 (By similarity). Colocalizes at the endosome with SNX6; this leads to lysosomal degradation (PubMed:20228253).</text>
</comment>
<comment type="domain">
    <text evidence="1">A peptide sequence containing only AA 28-79 retains substantial Kip1 cyclin A/CDK2 inhibitory activity.</text>
</comment>
<comment type="PTM">
    <text evidence="2">Phosphorylated; phosphorylation occurs on serine, threonine and tyrosine residues. Phosphorylation on Ser-10 is the major site of phosphorylation in resting cells, takes place at the G(0)-G(1) phase and leads to protein stability. Phosphorylation on other sites is greatly enhanced by mitogens, growth factors, MYC and in certain cancer cell lines. The phosphorylated form found in the cytoplasm is inactivate. Phosphorylation on Thr-197 is required for interaction with 14-3-3 proteins. Phosphorylation on Thr-187, by CDK1 and CDK2 leads to protein ubiquitination and proteasomal degradation. Tyrosine phosphorylation promotes this process. Phosphorylation by PKB/AKT1 can be suppressed by LY294002, an inhibitor of the catalytic subunit of PI3K. Phosphorylation on Tyr-88 and Tyr-89 has no effect on binding CDK2, but is required for binding CDK4. Dephosphorylated on tyrosine residues by G-CSF (By similarity). Dephosphorylated on Thr-187 by PPM1H, leading to CDKN1B stability (By similarity).</text>
</comment>
<comment type="PTM">
    <text evidence="1">Ubiquitinated; in the cytoplasm by the KPC complex (composed of RNF123/KPC1 and UBAC1/KPC2) and, in the nucleus, by SCF(SKP2). The latter requires prior phosphorylation on Thr-187. Ubiquitinated; by a TRIM21-containing SCF(SKP2)-like complex; leads to its degradation (By similarity).</text>
</comment>
<comment type="PTM">
    <text>Subject to degradation in the lysosome. Interaction with SNX6 promotes lysosomal degradation.</text>
</comment>
<comment type="similarity">
    <text evidence="18">Belongs to the CDI family.</text>
</comment>
<evidence type="ECO:0000250" key="1"/>
<evidence type="ECO:0000250" key="2">
    <source>
        <dbReference type="UniProtKB" id="P46527"/>
    </source>
</evidence>
<evidence type="ECO:0000255" key="3"/>
<evidence type="ECO:0000256" key="4">
    <source>
        <dbReference type="SAM" id="MobiDB-lite"/>
    </source>
</evidence>
<evidence type="ECO:0000269" key="5">
    <source>
    </source>
</evidence>
<evidence type="ECO:0000269" key="6">
    <source>
    </source>
</evidence>
<evidence type="ECO:0000269" key="7">
    <source>
    </source>
</evidence>
<evidence type="ECO:0000269" key="8">
    <source>
    </source>
</evidence>
<evidence type="ECO:0000269" key="9">
    <source>
    </source>
</evidence>
<evidence type="ECO:0000269" key="10">
    <source>
    </source>
</evidence>
<evidence type="ECO:0000269" key="11">
    <source>
    </source>
</evidence>
<evidence type="ECO:0000269" key="12">
    <source>
    </source>
</evidence>
<evidence type="ECO:0000269" key="13">
    <source>
    </source>
</evidence>
<evidence type="ECO:0000269" key="14">
    <source>
    </source>
</evidence>
<evidence type="ECO:0000269" key="15">
    <source>
    </source>
</evidence>
<evidence type="ECO:0000303" key="16">
    <source>
    </source>
</evidence>
<evidence type="ECO:0000303" key="17">
    <source>
    </source>
</evidence>
<evidence type="ECO:0000305" key="18"/>
<evidence type="ECO:0007744" key="19">
    <source>
    </source>
</evidence>
<accession>P46414</accession>
<accession>Q8BG74</accession>
<feature type="chain" id="PRO_0000190085" description="Cyclin-dependent kinase inhibitor 1B">
    <location>
        <begin position="1"/>
        <end position="197"/>
    </location>
</feature>
<feature type="region of interest" description="Disordered" evidence="4">
    <location>
        <begin position="1"/>
        <end position="34"/>
    </location>
</feature>
<feature type="region of interest" description="Interaction with CDK2" evidence="2">
    <location>
        <begin position="51"/>
        <end position="91"/>
    </location>
</feature>
<feature type="region of interest" description="Disordered" evidence="4">
    <location>
        <begin position="86"/>
        <end position="197"/>
    </location>
</feature>
<feature type="short sequence motif" description="Nuclear localization signal" evidence="3">
    <location>
        <begin position="153"/>
        <end position="169"/>
    </location>
</feature>
<feature type="compositionally biased region" description="Polar residues" evidence="4">
    <location>
        <begin position="1"/>
        <end position="11"/>
    </location>
</feature>
<feature type="compositionally biased region" description="Basic and acidic residues" evidence="4">
    <location>
        <begin position="14"/>
        <end position="25"/>
    </location>
</feature>
<feature type="compositionally biased region" description="Polar residues" evidence="4">
    <location>
        <begin position="104"/>
        <end position="113"/>
    </location>
</feature>
<feature type="compositionally biased region" description="Polar residues" evidence="4">
    <location>
        <begin position="175"/>
        <end position="186"/>
    </location>
</feature>
<feature type="site" description="Required for interaction with NUP50">
    <location>
        <position position="90"/>
    </location>
</feature>
<feature type="modified residue" description="Phosphoserine; by UHMK1" evidence="7 9 19">
    <location>
        <position position="10"/>
    </location>
</feature>
<feature type="modified residue" description="Phosphotyrosine; by SRC" evidence="2">
    <location>
        <position position="74"/>
    </location>
</feature>
<feature type="modified residue" description="Phosphotyrosine; by ABL, LYN, SRC and JAK2" evidence="2">
    <location>
        <position position="88"/>
    </location>
</feature>
<feature type="modified residue" description="Phosphotyrosine" evidence="2">
    <location>
        <position position="89"/>
    </location>
</feature>
<feature type="modified residue" description="Phosphothreonine; by CaMK1" evidence="12">
    <location>
        <position position="170"/>
    </location>
</feature>
<feature type="modified residue" description="Phosphothreonine; by PKB/AKT1, CDK1 and CDK2" evidence="15">
    <location>
        <position position="187"/>
    </location>
</feature>
<feature type="modified residue" description="Phosphothreonine; by CaMK1, PKB/AKT1, RPS6KA1, RPS6KA3 and PIM1" evidence="2">
    <location>
        <position position="197"/>
    </location>
</feature>
<feature type="mutagenesis site" description="Loss of phosphorylation in G(0) phase. No change in cMYC-induced CDK2-mediated phosphorylation. Rapid dissociation from the cyclin E/CDK2 complex after induction by cMYC. Loss of protein stability in G(0) phase. No change in protein stability at S-phase." evidence="9 15">
    <original>S</original>
    <variation>A</variation>
    <location>
        <position position="10"/>
    </location>
</feature>
<feature type="mutagenesis site" description="Loss of interaction with NUP50. No cyclin E-mediated degradation of phosphorylated p27KIP1." evidence="6">
    <original>R</original>
    <variation>G</variation>
    <location>
        <position position="90"/>
    </location>
</feature>
<feature type="mutagenesis site" description="Loss of cMyc-induced CDK2-mediated phosphorylation. Rapid dissociation from the cyclin E/CDK2 complex after induction by c-Myc." evidence="15">
    <original>T</original>
    <variation>E</variation>
    <location>
        <position position="187"/>
    </location>
</feature>
<feature type="mutagenesis site" description="Loss of cMYC-induced CDK2-mediated phosphorylation Dissociates very slowly from the cyclin E/CDK2 complex after induction by cMYC. Cell cycle arrest." evidence="15">
    <original>T</original>
    <variation>V</variation>
    <location>
        <position position="187"/>
    </location>
</feature>
<feature type="sequence conflict" description="In Ref. 1; AAA21149, 2; AAA20235 and 5; AAH14296." evidence="18" ref="1 2 5">
    <original>E</original>
    <variation>D</variation>
    <location>
        <position position="22"/>
    </location>
</feature>
<feature type="sequence conflict" description="In Ref. 1; AAA21149, 2; AAA20235 and 5; AAH14296." evidence="18" ref="1 2 5">
    <original>P</original>
    <variation>Q</variation>
    <location>
        <position position="141"/>
    </location>
</feature>
<gene>
    <name type="primary">Cdkn1b</name>
</gene>
<organism>
    <name type="scientific">Mus musculus</name>
    <name type="common">Mouse</name>
    <dbReference type="NCBI Taxonomy" id="10090"/>
    <lineage>
        <taxon>Eukaryota</taxon>
        <taxon>Metazoa</taxon>
        <taxon>Chordata</taxon>
        <taxon>Craniata</taxon>
        <taxon>Vertebrata</taxon>
        <taxon>Euteleostomi</taxon>
        <taxon>Mammalia</taxon>
        <taxon>Eutheria</taxon>
        <taxon>Euarchontoglires</taxon>
        <taxon>Glires</taxon>
        <taxon>Rodentia</taxon>
        <taxon>Myomorpha</taxon>
        <taxon>Muroidea</taxon>
        <taxon>Muridae</taxon>
        <taxon>Murinae</taxon>
        <taxon>Mus</taxon>
        <taxon>Mus</taxon>
    </lineage>
</organism>
<keyword id="KW-0131">Cell cycle</keyword>
<keyword id="KW-0963">Cytoplasm</keyword>
<keyword id="KW-0967">Endosome</keyword>
<keyword id="KW-0539">Nucleus</keyword>
<keyword id="KW-0597">Phosphoprotein</keyword>
<keyword id="KW-0649">Protein kinase inhibitor</keyword>
<keyword id="KW-1185">Reference proteome</keyword>
<keyword id="KW-0832">Ubl conjugation</keyword>
<sequence>MSNVRVSNGSPSLERMDARQAEHPKPSACRNLFGPVNHEELTRDLEKHCRDMEEASQRKWNFDFQNHKPLEGRYEWQEVERGSLPEFYYRPPRPPKSACKVLAQESQDVSGSRQAVPLIGSQANSEDRHLVDQMPDSSDNPAGLAEQCPGMRKRPAAEDSSSQNKRANRTEENVSDGSPNAGTVEQTPKKPGLRRQT</sequence>
<name>CDN1B_MOUSE</name>
<dbReference type="EMBL" id="U10440">
    <property type="protein sequence ID" value="AAA21149.1"/>
    <property type="molecule type" value="mRNA"/>
</dbReference>
<dbReference type="EMBL" id="U09968">
    <property type="protein sequence ID" value="AAA20235.1"/>
    <property type="molecule type" value="mRNA"/>
</dbReference>
<dbReference type="EMBL" id="AK046676">
    <property type="protein sequence ID" value="BAC32833.1"/>
    <property type="molecule type" value="mRNA"/>
</dbReference>
<dbReference type="EMBL" id="AK047669">
    <property type="protein sequence ID" value="BAC33119.1"/>
    <property type="molecule type" value="mRNA"/>
</dbReference>
<dbReference type="EMBL" id="AK050240">
    <property type="protein sequence ID" value="BAC34141.1"/>
    <property type="molecule type" value="mRNA"/>
</dbReference>
<dbReference type="EMBL" id="AC122193">
    <property type="status" value="NOT_ANNOTATED_CDS"/>
    <property type="molecule type" value="Genomic_DNA"/>
</dbReference>
<dbReference type="EMBL" id="BC014296">
    <property type="protein sequence ID" value="AAH14296.1"/>
    <property type="molecule type" value="mRNA"/>
</dbReference>
<dbReference type="CCDS" id="CCDS20642.1"/>
<dbReference type="PIR" id="I49064">
    <property type="entry name" value="I49064"/>
</dbReference>
<dbReference type="RefSeq" id="NP_034005.2">
    <property type="nucleotide sequence ID" value="NM_009875.4"/>
</dbReference>
<dbReference type="SMR" id="P46414"/>
<dbReference type="BioGRID" id="198652">
    <property type="interactions" value="40"/>
</dbReference>
<dbReference type="DIP" id="DIP-445N"/>
<dbReference type="FunCoup" id="P46414">
    <property type="interactions" value="3984"/>
</dbReference>
<dbReference type="IntAct" id="P46414">
    <property type="interactions" value="8"/>
</dbReference>
<dbReference type="MINT" id="P46414"/>
<dbReference type="STRING" id="10090.ENSMUSP00000065832"/>
<dbReference type="GlyGen" id="P46414">
    <property type="glycosylation" value="1 site, 1 N-linked glycan (1 site)"/>
</dbReference>
<dbReference type="iPTMnet" id="P46414"/>
<dbReference type="PhosphoSitePlus" id="P46414"/>
<dbReference type="SwissPalm" id="P46414"/>
<dbReference type="jPOST" id="P46414"/>
<dbReference type="PaxDb" id="10090-ENSMUSP00000003115"/>
<dbReference type="PeptideAtlas" id="P46414"/>
<dbReference type="ProteomicsDB" id="281520"/>
<dbReference type="Pumba" id="P46414"/>
<dbReference type="Antibodypedia" id="3295">
    <property type="antibodies" value="2755 antibodies from 48 providers"/>
</dbReference>
<dbReference type="DNASU" id="12576"/>
<dbReference type="Ensembl" id="ENSMUST00000003115.9">
    <property type="protein sequence ID" value="ENSMUSP00000003115.7"/>
    <property type="gene ID" value="ENSMUSG00000003031.15"/>
</dbReference>
<dbReference type="Ensembl" id="ENSMUST00000067327.11">
    <property type="protein sequence ID" value="ENSMUSP00000065832.5"/>
    <property type="gene ID" value="ENSMUSG00000003031.15"/>
</dbReference>
<dbReference type="Ensembl" id="ENSMUST00000204807.2">
    <property type="protein sequence ID" value="ENSMUSP00000145056.2"/>
    <property type="gene ID" value="ENSMUSG00000003031.15"/>
</dbReference>
<dbReference type="GeneID" id="12576"/>
<dbReference type="KEGG" id="mmu:12576"/>
<dbReference type="UCSC" id="uc009ela.2">
    <property type="organism name" value="mouse"/>
</dbReference>
<dbReference type="AGR" id="MGI:104565"/>
<dbReference type="CTD" id="1027"/>
<dbReference type="MGI" id="MGI:104565">
    <property type="gene designation" value="Cdkn1b"/>
</dbReference>
<dbReference type="VEuPathDB" id="HostDB:ENSMUSG00000003031"/>
<dbReference type="eggNOG" id="KOG4743">
    <property type="taxonomic scope" value="Eukaryota"/>
</dbReference>
<dbReference type="GeneTree" id="ENSGT00940000159852"/>
<dbReference type="HOGENOM" id="CLU_077692_2_0_1"/>
<dbReference type="InParanoid" id="P46414"/>
<dbReference type="OMA" id="THLRDQK"/>
<dbReference type="OrthoDB" id="6373236at2759"/>
<dbReference type="PhylomeDB" id="P46414"/>
<dbReference type="TreeFam" id="TF101038"/>
<dbReference type="Reactome" id="R-MMU-187577">
    <property type="pathway name" value="SCF(Skp2)-mediated degradation of p27/p21"/>
</dbReference>
<dbReference type="Reactome" id="R-MMU-198323">
    <property type="pathway name" value="AKT phosphorylates targets in the cytosol"/>
</dbReference>
<dbReference type="Reactome" id="R-MMU-2559582">
    <property type="pathway name" value="Senescence-Associated Secretory Phenotype (SASP)"/>
</dbReference>
<dbReference type="Reactome" id="R-MMU-2559586">
    <property type="pathway name" value="DNA Damage/Telomere Stress Induced Senescence"/>
</dbReference>
<dbReference type="Reactome" id="R-MMU-6804116">
    <property type="pathway name" value="TP53 Regulates Transcription of Genes Involved in G1 Cell Cycle Arrest"/>
</dbReference>
<dbReference type="Reactome" id="R-MMU-69202">
    <property type="pathway name" value="Cyclin E associated events during G1/S transition"/>
</dbReference>
<dbReference type="Reactome" id="R-MMU-69231">
    <property type="pathway name" value="Cyclin D associated events in G1"/>
</dbReference>
<dbReference type="Reactome" id="R-MMU-69563">
    <property type="pathway name" value="p53-Dependent G1 DNA Damage Response"/>
</dbReference>
<dbReference type="Reactome" id="R-MMU-69656">
    <property type="pathway name" value="Cyclin A:Cdk2-associated events at S phase entry"/>
</dbReference>
<dbReference type="Reactome" id="R-MMU-8849470">
    <property type="pathway name" value="PTK6 Regulates Cell Cycle"/>
</dbReference>
<dbReference type="Reactome" id="R-MMU-9607240">
    <property type="pathway name" value="FLT3 Signaling"/>
</dbReference>
<dbReference type="Reactome" id="R-MMU-9634638">
    <property type="pathway name" value="Estrogen-dependent nuclear events downstream of ESR-membrane signaling"/>
</dbReference>
<dbReference type="BioGRID-ORCS" id="12576">
    <property type="hits" value="2 hits in 80 CRISPR screens"/>
</dbReference>
<dbReference type="ChiTaRS" id="Cdkn1b">
    <property type="organism name" value="mouse"/>
</dbReference>
<dbReference type="PRO" id="PR:P46414"/>
<dbReference type="Proteomes" id="UP000000589">
    <property type="component" value="Chromosome 6"/>
</dbReference>
<dbReference type="RNAct" id="P46414">
    <property type="molecule type" value="protein"/>
</dbReference>
<dbReference type="Bgee" id="ENSMUSG00000003031">
    <property type="expression patterns" value="Expressed in cerebellar vermis and 256 other cell types or tissues"/>
</dbReference>
<dbReference type="GO" id="GO:0005813">
    <property type="term" value="C:centrosome"/>
    <property type="evidence" value="ECO:0007669"/>
    <property type="project" value="Ensembl"/>
</dbReference>
<dbReference type="GO" id="GO:0036064">
    <property type="term" value="C:ciliary basal body"/>
    <property type="evidence" value="ECO:0007669"/>
    <property type="project" value="Ensembl"/>
</dbReference>
<dbReference type="GO" id="GO:0031464">
    <property type="term" value="C:Cul4A-RING E3 ubiquitin ligase complex"/>
    <property type="evidence" value="ECO:0007669"/>
    <property type="project" value="Ensembl"/>
</dbReference>
<dbReference type="GO" id="GO:0005737">
    <property type="term" value="C:cytoplasm"/>
    <property type="evidence" value="ECO:0000314"/>
    <property type="project" value="MGI"/>
</dbReference>
<dbReference type="GO" id="GO:0005829">
    <property type="term" value="C:cytosol"/>
    <property type="evidence" value="ECO:0000314"/>
    <property type="project" value="MGI"/>
</dbReference>
<dbReference type="GO" id="GO:0005768">
    <property type="term" value="C:endosome"/>
    <property type="evidence" value="ECO:0007669"/>
    <property type="project" value="UniProtKB-SubCell"/>
</dbReference>
<dbReference type="GO" id="GO:0005654">
    <property type="term" value="C:nucleoplasm"/>
    <property type="evidence" value="ECO:0007669"/>
    <property type="project" value="Ensembl"/>
</dbReference>
<dbReference type="GO" id="GO:0005634">
    <property type="term" value="C:nucleus"/>
    <property type="evidence" value="ECO:0000314"/>
    <property type="project" value="MGI"/>
</dbReference>
<dbReference type="GO" id="GO:0030332">
    <property type="term" value="F:cyclin binding"/>
    <property type="evidence" value="ECO:0000314"/>
    <property type="project" value="BHF-UCL"/>
</dbReference>
<dbReference type="GO" id="GO:0004861">
    <property type="term" value="F:cyclin-dependent protein serine/threonine kinase inhibitor activity"/>
    <property type="evidence" value="ECO:0000314"/>
    <property type="project" value="MGI"/>
</dbReference>
<dbReference type="GO" id="GO:0019901">
    <property type="term" value="F:protein kinase binding"/>
    <property type="evidence" value="ECO:0007669"/>
    <property type="project" value="Ensembl"/>
</dbReference>
<dbReference type="GO" id="GO:0019903">
    <property type="term" value="F:protein phosphatase binding"/>
    <property type="evidence" value="ECO:0007669"/>
    <property type="project" value="Ensembl"/>
</dbReference>
<dbReference type="GO" id="GO:0044877">
    <property type="term" value="F:protein-containing complex binding"/>
    <property type="evidence" value="ECO:0007669"/>
    <property type="project" value="Ensembl"/>
</dbReference>
<dbReference type="GO" id="GO:0006915">
    <property type="term" value="P:apoptotic process"/>
    <property type="evidence" value="ECO:0000315"/>
    <property type="project" value="MGI"/>
</dbReference>
<dbReference type="GO" id="GO:0048102">
    <property type="term" value="P:autophagic cell death"/>
    <property type="evidence" value="ECO:0007669"/>
    <property type="project" value="Ensembl"/>
</dbReference>
<dbReference type="GO" id="GO:0071236">
    <property type="term" value="P:cellular response to antibiotic"/>
    <property type="evidence" value="ECO:0000314"/>
    <property type="project" value="MGI"/>
</dbReference>
<dbReference type="GO" id="GO:0071285">
    <property type="term" value="P:cellular response to lithium ion"/>
    <property type="evidence" value="ECO:0000266"/>
    <property type="project" value="MGI"/>
</dbReference>
<dbReference type="GO" id="GO:1904019">
    <property type="term" value="P:epithelial cell apoptotic process"/>
    <property type="evidence" value="ECO:0000315"/>
    <property type="project" value="MGI"/>
</dbReference>
<dbReference type="GO" id="GO:0060767">
    <property type="term" value="P:epithelial cell proliferation involved in prostate gland development"/>
    <property type="evidence" value="ECO:0000315"/>
    <property type="project" value="MGI"/>
</dbReference>
<dbReference type="GO" id="GO:0000082">
    <property type="term" value="P:G1/S transition of mitotic cell cycle"/>
    <property type="evidence" value="ECO:0000314"/>
    <property type="project" value="UniProtKB"/>
</dbReference>
<dbReference type="GO" id="GO:0007507">
    <property type="term" value="P:heart development"/>
    <property type="evidence" value="ECO:0000315"/>
    <property type="project" value="BHF-UCL"/>
</dbReference>
<dbReference type="GO" id="GO:0048839">
    <property type="term" value="P:inner ear development"/>
    <property type="evidence" value="ECO:0000315"/>
    <property type="project" value="MGI"/>
</dbReference>
<dbReference type="GO" id="GO:1905179">
    <property type="term" value="P:negative regulation of cardiac muscle tissue regeneration"/>
    <property type="evidence" value="ECO:0000315"/>
    <property type="project" value="BHF-UCL"/>
</dbReference>
<dbReference type="GO" id="GO:0030308">
    <property type="term" value="P:negative regulation of cell growth"/>
    <property type="evidence" value="ECO:0007669"/>
    <property type="project" value="Ensembl"/>
</dbReference>
<dbReference type="GO" id="GO:0008285">
    <property type="term" value="P:negative regulation of cell population proliferation"/>
    <property type="evidence" value="ECO:0000315"/>
    <property type="project" value="MGI"/>
</dbReference>
<dbReference type="GO" id="GO:0045892">
    <property type="term" value="P:negative regulation of DNA-templated transcription"/>
    <property type="evidence" value="ECO:0007669"/>
    <property type="project" value="Ensembl"/>
</dbReference>
<dbReference type="GO" id="GO:1904036">
    <property type="term" value="P:negative regulation of epithelial cell apoptotic process"/>
    <property type="evidence" value="ECO:0000315"/>
    <property type="project" value="MGI"/>
</dbReference>
<dbReference type="GO" id="GO:0050680">
    <property type="term" value="P:negative regulation of epithelial cell proliferation"/>
    <property type="evidence" value="ECO:0000315"/>
    <property type="project" value="MGI"/>
</dbReference>
<dbReference type="GO" id="GO:0060770">
    <property type="term" value="P:negative regulation of epithelial cell proliferation involved in prostate gland development"/>
    <property type="evidence" value="ECO:0000315"/>
    <property type="project" value="MGI"/>
</dbReference>
<dbReference type="GO" id="GO:1904706">
    <property type="term" value="P:negative regulation of vascular associated smooth muscle cell proliferation"/>
    <property type="evidence" value="ECO:0007669"/>
    <property type="project" value="Ensembl"/>
</dbReference>
<dbReference type="GO" id="GO:0007219">
    <property type="term" value="P:Notch signaling pathway"/>
    <property type="evidence" value="ECO:0000314"/>
    <property type="project" value="MGI"/>
</dbReference>
<dbReference type="GO" id="GO:0051168">
    <property type="term" value="P:nuclear export"/>
    <property type="evidence" value="ECO:0007669"/>
    <property type="project" value="Ensembl"/>
</dbReference>
<dbReference type="GO" id="GO:0001890">
    <property type="term" value="P:placenta development"/>
    <property type="evidence" value="ECO:0000316"/>
    <property type="project" value="MGI"/>
</dbReference>
<dbReference type="GO" id="GO:0008284">
    <property type="term" value="P:positive regulation of cell population proliferation"/>
    <property type="evidence" value="ECO:0000315"/>
    <property type="project" value="MGI"/>
</dbReference>
<dbReference type="GO" id="GO:0031116">
    <property type="term" value="P:positive regulation of microtubule polymerization"/>
    <property type="evidence" value="ECO:0000316"/>
    <property type="project" value="MGI"/>
</dbReference>
<dbReference type="GO" id="GO:0045732">
    <property type="term" value="P:positive regulation of protein catabolic process"/>
    <property type="evidence" value="ECO:0007669"/>
    <property type="project" value="Ensembl"/>
</dbReference>
<dbReference type="GO" id="GO:0006813">
    <property type="term" value="P:potassium ion transport"/>
    <property type="evidence" value="ECO:0000316"/>
    <property type="project" value="MGI"/>
</dbReference>
<dbReference type="GO" id="GO:0051726">
    <property type="term" value="P:regulation of cell cycle"/>
    <property type="evidence" value="ECO:0000315"/>
    <property type="project" value="BHF-UCL"/>
</dbReference>
<dbReference type="GO" id="GO:0030334">
    <property type="term" value="P:regulation of cell migration"/>
    <property type="evidence" value="ECO:0000314"/>
    <property type="project" value="MGI"/>
</dbReference>
<dbReference type="GO" id="GO:0007096">
    <property type="term" value="P:regulation of exit from mitosis"/>
    <property type="evidence" value="ECO:0000316"/>
    <property type="project" value="MGI"/>
</dbReference>
<dbReference type="GO" id="GO:2000045">
    <property type="term" value="P:regulation of G1/S transition of mitotic cell cycle"/>
    <property type="evidence" value="ECO:0007669"/>
    <property type="project" value="Ensembl"/>
</dbReference>
<dbReference type="GO" id="GO:1902746">
    <property type="term" value="P:regulation of lens fiber cell differentiation"/>
    <property type="evidence" value="ECO:0000316"/>
    <property type="project" value="MGI"/>
</dbReference>
<dbReference type="GO" id="GO:0007346">
    <property type="term" value="P:regulation of mitotic cell cycle"/>
    <property type="evidence" value="ECO:0000314"/>
    <property type="project" value="MGI"/>
</dbReference>
<dbReference type="GO" id="GO:0007605">
    <property type="term" value="P:sensory perception of sound"/>
    <property type="evidence" value="ECO:0000315"/>
    <property type="project" value="MGI"/>
</dbReference>
<dbReference type="FunFam" id="4.10.365.10:FF:000001">
    <property type="entry name" value="Cyclin-dependent kinase inhibitor 1B"/>
    <property type="match status" value="1"/>
</dbReference>
<dbReference type="Gene3D" id="4.10.365.10">
    <property type="entry name" value="p27"/>
    <property type="match status" value="1"/>
</dbReference>
<dbReference type="InterPro" id="IPR003175">
    <property type="entry name" value="CDI_dom"/>
</dbReference>
<dbReference type="InterPro" id="IPR044898">
    <property type="entry name" value="CDI_dom_sf"/>
</dbReference>
<dbReference type="PANTHER" id="PTHR10265">
    <property type="entry name" value="CYCLIN-DEPENDENT KINASE INHIBITOR 1"/>
    <property type="match status" value="1"/>
</dbReference>
<dbReference type="PANTHER" id="PTHR10265:SF9">
    <property type="entry name" value="CYCLIN-DEPENDENT KINASE INHIBITOR 1B"/>
    <property type="match status" value="1"/>
</dbReference>
<dbReference type="Pfam" id="PF02234">
    <property type="entry name" value="CDI"/>
    <property type="match status" value="1"/>
</dbReference>
<proteinExistence type="evidence at protein level"/>
<protein>
    <recommendedName>
        <fullName>Cyclin-dependent kinase inhibitor 1B</fullName>
    </recommendedName>
    <alternativeName>
        <fullName evidence="17">Cyclin-dependent kinase inhibitor p27</fullName>
    </alternativeName>
    <alternativeName>
        <fullName evidence="16">p27Kip1</fullName>
    </alternativeName>
</protein>
<reference key="1">
    <citation type="journal article" date="1994" name="Cell">
        <title>p27, a novel inhibitor of G1 cyclin-Cdk protein kinase activity, is related to p21.</title>
        <authorList>
            <person name="Toyoshima H."/>
            <person name="Hunter T."/>
        </authorList>
    </citation>
    <scope>NUCLEOTIDE SEQUENCE [MRNA]</scope>
    <scope>FUNCTION</scope>
</reference>
<reference key="2">
    <citation type="journal article" date="1994" name="Cell">
        <title>Cloning of p27Kip1, a cyclin-dependent kinase inhibitor and a potential mediator of extracellular antimitogenic signals.</title>
        <authorList>
            <person name="Polyak K."/>
            <person name="Lee M.-H."/>
            <person name="Erdjument-Bromage H."/>
            <person name="Koff A."/>
            <person name="Roberts J.M."/>
            <person name="Tempst P."/>
            <person name="Massague J."/>
        </authorList>
    </citation>
    <scope>NUCLEOTIDE SEQUENCE [MRNA]</scope>
    <source>
        <tissue>Embryo</tissue>
    </source>
</reference>
<reference key="3">
    <citation type="journal article" date="2005" name="Science">
        <title>The transcriptional landscape of the mammalian genome.</title>
        <authorList>
            <person name="Carninci P."/>
            <person name="Kasukawa T."/>
            <person name="Katayama S."/>
            <person name="Gough J."/>
            <person name="Frith M.C."/>
            <person name="Maeda N."/>
            <person name="Oyama R."/>
            <person name="Ravasi T."/>
            <person name="Lenhard B."/>
            <person name="Wells C."/>
            <person name="Kodzius R."/>
            <person name="Shimokawa K."/>
            <person name="Bajic V.B."/>
            <person name="Brenner S.E."/>
            <person name="Batalov S."/>
            <person name="Forrest A.R."/>
            <person name="Zavolan M."/>
            <person name="Davis M.J."/>
            <person name="Wilming L.G."/>
            <person name="Aidinis V."/>
            <person name="Allen J.E."/>
            <person name="Ambesi-Impiombato A."/>
            <person name="Apweiler R."/>
            <person name="Aturaliya R.N."/>
            <person name="Bailey T.L."/>
            <person name="Bansal M."/>
            <person name="Baxter L."/>
            <person name="Beisel K.W."/>
            <person name="Bersano T."/>
            <person name="Bono H."/>
            <person name="Chalk A.M."/>
            <person name="Chiu K.P."/>
            <person name="Choudhary V."/>
            <person name="Christoffels A."/>
            <person name="Clutterbuck D.R."/>
            <person name="Crowe M.L."/>
            <person name="Dalla E."/>
            <person name="Dalrymple B.P."/>
            <person name="de Bono B."/>
            <person name="Della Gatta G."/>
            <person name="di Bernardo D."/>
            <person name="Down T."/>
            <person name="Engstrom P."/>
            <person name="Fagiolini M."/>
            <person name="Faulkner G."/>
            <person name="Fletcher C.F."/>
            <person name="Fukushima T."/>
            <person name="Furuno M."/>
            <person name="Futaki S."/>
            <person name="Gariboldi M."/>
            <person name="Georgii-Hemming P."/>
            <person name="Gingeras T.R."/>
            <person name="Gojobori T."/>
            <person name="Green R.E."/>
            <person name="Gustincich S."/>
            <person name="Harbers M."/>
            <person name="Hayashi Y."/>
            <person name="Hensch T.K."/>
            <person name="Hirokawa N."/>
            <person name="Hill D."/>
            <person name="Huminiecki L."/>
            <person name="Iacono M."/>
            <person name="Ikeo K."/>
            <person name="Iwama A."/>
            <person name="Ishikawa T."/>
            <person name="Jakt M."/>
            <person name="Kanapin A."/>
            <person name="Katoh M."/>
            <person name="Kawasawa Y."/>
            <person name="Kelso J."/>
            <person name="Kitamura H."/>
            <person name="Kitano H."/>
            <person name="Kollias G."/>
            <person name="Krishnan S.P."/>
            <person name="Kruger A."/>
            <person name="Kummerfeld S.K."/>
            <person name="Kurochkin I.V."/>
            <person name="Lareau L.F."/>
            <person name="Lazarevic D."/>
            <person name="Lipovich L."/>
            <person name="Liu J."/>
            <person name="Liuni S."/>
            <person name="McWilliam S."/>
            <person name="Madan Babu M."/>
            <person name="Madera M."/>
            <person name="Marchionni L."/>
            <person name="Matsuda H."/>
            <person name="Matsuzawa S."/>
            <person name="Miki H."/>
            <person name="Mignone F."/>
            <person name="Miyake S."/>
            <person name="Morris K."/>
            <person name="Mottagui-Tabar S."/>
            <person name="Mulder N."/>
            <person name="Nakano N."/>
            <person name="Nakauchi H."/>
            <person name="Ng P."/>
            <person name="Nilsson R."/>
            <person name="Nishiguchi S."/>
            <person name="Nishikawa S."/>
            <person name="Nori F."/>
            <person name="Ohara O."/>
            <person name="Okazaki Y."/>
            <person name="Orlando V."/>
            <person name="Pang K.C."/>
            <person name="Pavan W.J."/>
            <person name="Pavesi G."/>
            <person name="Pesole G."/>
            <person name="Petrovsky N."/>
            <person name="Piazza S."/>
            <person name="Reed J."/>
            <person name="Reid J.F."/>
            <person name="Ring B.Z."/>
            <person name="Ringwald M."/>
            <person name="Rost B."/>
            <person name="Ruan Y."/>
            <person name="Salzberg S.L."/>
            <person name="Sandelin A."/>
            <person name="Schneider C."/>
            <person name="Schoenbach C."/>
            <person name="Sekiguchi K."/>
            <person name="Semple C.A."/>
            <person name="Seno S."/>
            <person name="Sessa L."/>
            <person name="Sheng Y."/>
            <person name="Shibata Y."/>
            <person name="Shimada H."/>
            <person name="Shimada K."/>
            <person name="Silva D."/>
            <person name="Sinclair B."/>
            <person name="Sperling S."/>
            <person name="Stupka E."/>
            <person name="Sugiura K."/>
            <person name="Sultana R."/>
            <person name="Takenaka Y."/>
            <person name="Taki K."/>
            <person name="Tammoja K."/>
            <person name="Tan S.L."/>
            <person name="Tang S."/>
            <person name="Taylor M.S."/>
            <person name="Tegner J."/>
            <person name="Teichmann S.A."/>
            <person name="Ueda H.R."/>
            <person name="van Nimwegen E."/>
            <person name="Verardo R."/>
            <person name="Wei C.L."/>
            <person name="Yagi K."/>
            <person name="Yamanishi H."/>
            <person name="Zabarovsky E."/>
            <person name="Zhu S."/>
            <person name="Zimmer A."/>
            <person name="Hide W."/>
            <person name="Bult C."/>
            <person name="Grimmond S.M."/>
            <person name="Teasdale R.D."/>
            <person name="Liu E.T."/>
            <person name="Brusic V."/>
            <person name="Quackenbush J."/>
            <person name="Wahlestedt C."/>
            <person name="Mattick J.S."/>
            <person name="Hume D.A."/>
            <person name="Kai C."/>
            <person name="Sasaki D."/>
            <person name="Tomaru Y."/>
            <person name="Fukuda S."/>
            <person name="Kanamori-Katayama M."/>
            <person name="Suzuki M."/>
            <person name="Aoki J."/>
            <person name="Arakawa T."/>
            <person name="Iida J."/>
            <person name="Imamura K."/>
            <person name="Itoh M."/>
            <person name="Kato T."/>
            <person name="Kawaji H."/>
            <person name="Kawagashira N."/>
            <person name="Kawashima T."/>
            <person name="Kojima M."/>
            <person name="Kondo S."/>
            <person name="Konno H."/>
            <person name="Nakano K."/>
            <person name="Ninomiya N."/>
            <person name="Nishio T."/>
            <person name="Okada M."/>
            <person name="Plessy C."/>
            <person name="Shibata K."/>
            <person name="Shiraki T."/>
            <person name="Suzuki S."/>
            <person name="Tagami M."/>
            <person name="Waki K."/>
            <person name="Watahiki A."/>
            <person name="Okamura-Oho Y."/>
            <person name="Suzuki H."/>
            <person name="Kawai J."/>
            <person name="Hayashizaki Y."/>
        </authorList>
    </citation>
    <scope>NUCLEOTIDE SEQUENCE [LARGE SCALE MRNA]</scope>
    <source>
        <strain>C57BL/6J</strain>
        <tissue>Adipose tissue</tissue>
        <tissue>Corpus striatum</tissue>
        <tissue>Liver</tissue>
    </source>
</reference>
<reference key="4">
    <citation type="journal article" date="2009" name="PLoS Biol.">
        <title>Lineage-specific biology revealed by a finished genome assembly of the mouse.</title>
        <authorList>
            <person name="Church D.M."/>
            <person name="Goodstadt L."/>
            <person name="Hillier L.W."/>
            <person name="Zody M.C."/>
            <person name="Goldstein S."/>
            <person name="She X."/>
            <person name="Bult C.J."/>
            <person name="Agarwala R."/>
            <person name="Cherry J.L."/>
            <person name="DiCuccio M."/>
            <person name="Hlavina W."/>
            <person name="Kapustin Y."/>
            <person name="Meric P."/>
            <person name="Maglott D."/>
            <person name="Birtle Z."/>
            <person name="Marques A.C."/>
            <person name="Graves T."/>
            <person name="Zhou S."/>
            <person name="Teague B."/>
            <person name="Potamousis K."/>
            <person name="Churas C."/>
            <person name="Place M."/>
            <person name="Herschleb J."/>
            <person name="Runnheim R."/>
            <person name="Forrest D."/>
            <person name="Amos-Landgraf J."/>
            <person name="Schwartz D.C."/>
            <person name="Cheng Z."/>
            <person name="Lindblad-Toh K."/>
            <person name="Eichler E.E."/>
            <person name="Ponting C.P."/>
        </authorList>
    </citation>
    <scope>NUCLEOTIDE SEQUENCE [LARGE SCALE GENOMIC DNA]</scope>
    <source>
        <strain>C57BL/6J</strain>
    </source>
</reference>
<reference key="5">
    <citation type="journal article" date="2004" name="Genome Res.">
        <title>The status, quality, and expansion of the NIH full-length cDNA project: the Mammalian Gene Collection (MGC).</title>
        <authorList>
            <consortium name="The MGC Project Team"/>
        </authorList>
    </citation>
    <scope>NUCLEOTIDE SEQUENCE [LARGE SCALE MRNA]</scope>
    <source>
        <strain>FVB/N</strain>
        <tissue>Salivary gland</tissue>
    </source>
</reference>
<reference key="6">
    <citation type="journal article" date="1995" name="Mol. Biol. Cell">
        <title>Redistribution of the CDK inhibitor p27 between different cyclin.CDK complexes in the mouse fibroblast cell cycle and in cells arrested with lovastatin or ultraviolet irradiation.</title>
        <authorList>
            <person name="Poon R.Y."/>
            <person name="Toyoshima H."/>
            <person name="Hunter T."/>
        </authorList>
    </citation>
    <scope>INTERACTION WITH CCND1 IN THE CCND1-CDK4-CDKN1B COMPLEX</scope>
</reference>
<reference key="7">
    <citation type="journal article" date="1997" name="Oncogene">
        <title>Cdk2-dependent phosphorylation of p27 facilitates its Myc-induced release from cyclin E/cdk2 complexes.</title>
        <authorList>
            <person name="Mueller D."/>
            <person name="Bouchard C."/>
            <person name="Rudolph B."/>
            <person name="Steiner P."/>
            <person name="Stuckmann I."/>
            <person name="Saffrich R."/>
            <person name="Ansorge W."/>
            <person name="Huttner W."/>
            <person name="Eilers M."/>
        </authorList>
    </citation>
    <scope>PHOSPHORYLATION AT THR-187</scope>
    <scope>INTERACTION WITH CCNE1 IN CCNE1/ CDK2/CDKN1B COMPLEX</scope>
    <scope>FUNCTION</scope>
    <scope>MUTAGENESIS OF SER-10 AND THR-187</scope>
</reference>
<reference key="8">
    <citation type="journal article" date="1999" name="Nature">
        <title>Degradation of the cyclin-dependent-kinase inhibitor p27Kip1 is instigated by Jab1.</title>
        <authorList>
            <person name="Tomoda K."/>
            <person name="Kubota Y."/>
            <person name="Kato J.-Y."/>
        </authorList>
    </citation>
    <scope>INTERACTION WITH COPS5</scope>
</reference>
<reference key="9">
    <citation type="journal article" date="2000" name="EMBO J.">
        <title>Cyclin E-mediated elimination of p27 requires its interaction with the nuclear pore-associated protein mNPAP60.</title>
        <authorList>
            <person name="Mueller D."/>
            <person name="Thieke K."/>
            <person name="Buergin A."/>
            <person name="Dickmanns A."/>
            <person name="Eilers M."/>
        </authorList>
    </citation>
    <scope>INTERACTION WITH NUP50</scope>
    <scope>MUTAGENESIS OF ARG-90</scope>
    <source>
        <strain>BALB/cJ</strain>
    </source>
</reference>
<reference key="10">
    <citation type="journal article" date="2002" name="EMBO J.">
        <title>A growth factor-dependent nuclear kinase phosphorylates p27(Kip1) and regulates cell cycle progression.</title>
        <authorList>
            <person name="Boehm M."/>
            <person name="Yoshimoto T."/>
            <person name="Crook M.F."/>
            <person name="Nallamshetty S."/>
            <person name="True A."/>
            <person name="Nabel G.J."/>
            <person name="Nabel E.G."/>
        </authorList>
    </citation>
    <scope>INTERACTION WITH UHMK1</scope>
    <scope>FUNCTION</scope>
    <scope>SUBCELLULAR LOCATION</scope>
    <scope>PHOSPHORYLATION AT SER-10</scope>
</reference>
<reference key="11">
    <citation type="journal article" date="2003" name="Mol. Biol. Cell">
        <title>Spy1 interacts with p27Kip1 to allow G1/S progression.</title>
        <authorList>
            <person name="Porter L.A."/>
            <person name="Kong-Beltran M."/>
            <person name="Donoghue D.J."/>
        </authorList>
    </citation>
    <scope>INTERACTION WITH SPDYA</scope>
    <scope>FUNCTION</scope>
</reference>
<reference key="12">
    <citation type="journal article" date="2005" name="J. Biol. Chem.">
        <title>Role of serine 10 phosphorylation in p27 stabilization revealed by analysis of p27 knock-in mice harboring a serine 10 mutation.</title>
        <authorList>
            <person name="Kotake Y."/>
            <person name="Nakayama K."/>
            <person name="Ishida N."/>
            <person name="Nakayama K.I."/>
        </authorList>
    </citation>
    <scope>PHOSPHORYLATION AT SER-10</scope>
    <scope>FUNCTION</scope>
    <scope>MUTAGENESIS OF SER-10</scope>
</reference>
<reference key="13">
    <citation type="journal article" date="2007" name="Proc. Natl. Acad. Sci. U.S.A.">
        <title>Large-scale phosphorylation analysis of mouse liver.</title>
        <authorList>
            <person name="Villen J."/>
            <person name="Beausoleil S.A."/>
            <person name="Gerber S.A."/>
            <person name="Gygi S.P."/>
        </authorList>
    </citation>
    <scope>PHOSPHORYLATION [LARGE SCALE ANALYSIS] AT SER-10</scope>
    <scope>IDENTIFICATION BY MASS SPECTROMETRY [LARGE SCALE ANALYSIS]</scope>
    <source>
        <tissue>Liver</tissue>
    </source>
</reference>
<reference key="14">
    <citation type="journal article" date="2009" name="Oncogene">
        <title>Lysine 269 is essential for cyclin D1 ubiquitylation by the SCF(Fbx4/alphaB-crystallin) ligase and subsequent proteasome-dependent degradation.</title>
        <authorList>
            <person name="Barbash O."/>
            <person name="Egan E."/>
            <person name="Pontano L.L."/>
            <person name="Kosak J."/>
            <person name="Diehl J.A."/>
        </authorList>
    </citation>
    <scope>INTERACTION WITH CCND1</scope>
</reference>
<reference key="15">
    <citation type="journal article" date="2010" name="Cell">
        <title>A tissue-specific atlas of mouse protein phosphorylation and expression.</title>
        <authorList>
            <person name="Huttlin E.L."/>
            <person name="Jedrychowski M.P."/>
            <person name="Elias J.E."/>
            <person name="Goswami T."/>
            <person name="Rad R."/>
            <person name="Beausoleil S.A."/>
            <person name="Villen J."/>
            <person name="Haas W."/>
            <person name="Sowa M.E."/>
            <person name="Gygi S.P."/>
        </authorList>
    </citation>
    <scope>IDENTIFICATION BY MASS SPECTROMETRY [LARGE SCALE ANALYSIS]</scope>
    <source>
        <tissue>Brain</tissue>
        <tissue>Heart</tissue>
        <tissue>Kidney</tissue>
        <tissue>Liver</tissue>
        <tissue>Lung</tissue>
        <tissue>Pancreas</tissue>
        <tissue>Spleen</tissue>
        <tissue>Testis</tissue>
    </source>
</reference>
<reference key="16">
    <citation type="journal article" date="2010" name="FASEB J.">
        <title>Tumor suppressor p27(Kip1) undergoes endolysosomal degradation through its interaction with sorting nexin 6.</title>
        <authorList>
            <person name="Fuster J.J."/>
            <person name="Gonzalez J.M."/>
            <person name="Edo M.D."/>
            <person name="Viana R."/>
            <person name="Boya P."/>
            <person name="Cervera J."/>
            <person name="Verges M."/>
            <person name="Rivera J."/>
            <person name="Andres V."/>
        </authorList>
    </citation>
    <scope>FUNCTION</scope>
    <scope>SUBCELLULAR LOCATION</scope>
    <scope>DEGRADATION IN THE LYSOSOME</scope>
    <scope>INTERACTION WITH SNX6</scope>
</reference>
<reference key="17">
    <citation type="journal article" date="2013" name="Cell. Signal.">
        <title>Fbxl12 triggers G1 arrest by mediating degradation of calmodulin kinase I.</title>
        <authorList>
            <person name="Mallampalli R.K."/>
            <person name="Kaercher L."/>
            <person name="Snavely C."/>
            <person name="Pulijala R."/>
            <person name="Chen B.B."/>
            <person name="Coon T."/>
            <person name="Zhao J."/>
            <person name="Agassandian M."/>
        </authorList>
    </citation>
    <scope>PHOSPHORYLATION AT THR-170 AND THR-197 BY CAMK1</scope>
</reference>